<dbReference type="EMBL" id="M97797">
    <property type="protein sequence ID" value="AAA73377.1"/>
    <property type="molecule type" value="mRNA"/>
</dbReference>
<dbReference type="EMBL" id="S75952">
    <property type="protein sequence ID" value="AAP31860.1"/>
    <property type="molecule type" value="mRNA"/>
</dbReference>
<dbReference type="PIR" id="A46172">
    <property type="entry name" value="A46172"/>
</dbReference>
<dbReference type="RefSeq" id="NP_036860.1">
    <property type="nucleotide sequence ID" value="NM_012728.1"/>
</dbReference>
<dbReference type="SMR" id="P32301"/>
<dbReference type="BioGRID" id="247128">
    <property type="interactions" value="1"/>
</dbReference>
<dbReference type="CORUM" id="P32301"/>
<dbReference type="FunCoup" id="P32301">
    <property type="interactions" value="118"/>
</dbReference>
<dbReference type="STRING" id="10116.ENSRNOP00000001527"/>
<dbReference type="BindingDB" id="P32301"/>
<dbReference type="ChEMBL" id="CHEMBL5862"/>
<dbReference type="DrugCentral" id="P32301"/>
<dbReference type="GuidetoPHARMACOLOGY" id="249"/>
<dbReference type="GlyCosmos" id="P32301">
    <property type="glycosylation" value="3 sites, No reported glycans"/>
</dbReference>
<dbReference type="GlyGen" id="P32301">
    <property type="glycosylation" value="7 sites"/>
</dbReference>
<dbReference type="iPTMnet" id="P32301"/>
<dbReference type="PhosphoSitePlus" id="P32301"/>
<dbReference type="SwissPalm" id="P32301"/>
<dbReference type="PaxDb" id="10116-ENSRNOP00000001527"/>
<dbReference type="GeneID" id="25051"/>
<dbReference type="KEGG" id="rno:25051"/>
<dbReference type="AGR" id="RGD:2703"/>
<dbReference type="CTD" id="2740"/>
<dbReference type="RGD" id="2703">
    <property type="gene designation" value="Glp1r"/>
</dbReference>
<dbReference type="eggNOG" id="KOG4564">
    <property type="taxonomic scope" value="Eukaryota"/>
</dbReference>
<dbReference type="InParanoid" id="P32301"/>
<dbReference type="Reactome" id="R-RNO-381676">
    <property type="pathway name" value="Glucagon-like Peptide-1 (GLP1) regulates insulin secretion"/>
</dbReference>
<dbReference type="Reactome" id="R-RNO-420092">
    <property type="pathway name" value="Glucagon-type ligand receptors"/>
</dbReference>
<dbReference type="PRO" id="PR:P32301"/>
<dbReference type="Proteomes" id="UP000002494">
    <property type="component" value="Unplaced"/>
</dbReference>
<dbReference type="GO" id="GO:0005886">
    <property type="term" value="C:plasma membrane"/>
    <property type="evidence" value="ECO:0000314"/>
    <property type="project" value="UniProtKB"/>
</dbReference>
<dbReference type="GO" id="GO:0008528">
    <property type="term" value="F:G protein-coupled peptide receptor activity"/>
    <property type="evidence" value="ECO:0000353"/>
    <property type="project" value="RGD"/>
</dbReference>
<dbReference type="GO" id="GO:0004930">
    <property type="term" value="F:G protein-coupled receptor activity"/>
    <property type="evidence" value="ECO:0000304"/>
    <property type="project" value="RGD"/>
</dbReference>
<dbReference type="GO" id="GO:0004967">
    <property type="term" value="F:glucagon receptor activity"/>
    <property type="evidence" value="ECO:0000318"/>
    <property type="project" value="GO_Central"/>
</dbReference>
<dbReference type="GO" id="GO:0044508">
    <property type="term" value="F:glucagon-like peptide 1 receptor activity"/>
    <property type="evidence" value="ECO:0000314"/>
    <property type="project" value="UniProtKB"/>
</dbReference>
<dbReference type="GO" id="GO:0017046">
    <property type="term" value="F:peptide hormone binding"/>
    <property type="evidence" value="ECO:0000314"/>
    <property type="project" value="RGD"/>
</dbReference>
<dbReference type="GO" id="GO:0001653">
    <property type="term" value="F:peptide receptor activity"/>
    <property type="evidence" value="ECO:0000314"/>
    <property type="project" value="RGD"/>
</dbReference>
<dbReference type="GO" id="GO:0007189">
    <property type="term" value="P:adenylate cyclase-activating G protein-coupled receptor signaling pathway"/>
    <property type="evidence" value="ECO:0000315"/>
    <property type="project" value="RGD"/>
</dbReference>
<dbReference type="GO" id="GO:0008306">
    <property type="term" value="P:associative learning"/>
    <property type="evidence" value="ECO:0000314"/>
    <property type="project" value="RGD"/>
</dbReference>
<dbReference type="GO" id="GO:0141156">
    <property type="term" value="P:cAMP/PKA signal transduction"/>
    <property type="evidence" value="ECO:0000315"/>
    <property type="project" value="RGD"/>
</dbReference>
<dbReference type="GO" id="GO:0007166">
    <property type="term" value="P:cell surface receptor signaling pathway"/>
    <property type="evidence" value="ECO:0007669"/>
    <property type="project" value="InterPro"/>
</dbReference>
<dbReference type="GO" id="GO:0007631">
    <property type="term" value="P:feeding behavior"/>
    <property type="evidence" value="ECO:0000315"/>
    <property type="project" value="RGD"/>
</dbReference>
<dbReference type="GO" id="GO:0046879">
    <property type="term" value="P:hormone secretion"/>
    <property type="evidence" value="ECO:0000314"/>
    <property type="project" value="UniProtKB"/>
</dbReference>
<dbReference type="GO" id="GO:0030073">
    <property type="term" value="P:insulin secretion"/>
    <property type="evidence" value="ECO:0000315"/>
    <property type="project" value="UniProtKB"/>
</dbReference>
<dbReference type="GO" id="GO:0007611">
    <property type="term" value="P:learning or memory"/>
    <property type="evidence" value="ECO:0000315"/>
    <property type="project" value="UniProtKB"/>
</dbReference>
<dbReference type="GO" id="GO:0007613">
    <property type="term" value="P:memory"/>
    <property type="evidence" value="ECO:0000314"/>
    <property type="project" value="RGD"/>
</dbReference>
<dbReference type="GO" id="GO:0043066">
    <property type="term" value="P:negative regulation of apoptotic process"/>
    <property type="evidence" value="ECO:0000314"/>
    <property type="project" value="RGD"/>
</dbReference>
<dbReference type="GO" id="GO:0045776">
    <property type="term" value="P:negative regulation of blood pressure"/>
    <property type="evidence" value="ECO:0000266"/>
    <property type="project" value="RGD"/>
</dbReference>
<dbReference type="GO" id="GO:0043524">
    <property type="term" value="P:negative regulation of neuron apoptotic process"/>
    <property type="evidence" value="ECO:0000314"/>
    <property type="project" value="RGD"/>
</dbReference>
<dbReference type="GO" id="GO:0007218">
    <property type="term" value="P:neuropeptide signaling pathway"/>
    <property type="evidence" value="ECO:0000304"/>
    <property type="project" value="RGD"/>
</dbReference>
<dbReference type="GO" id="GO:0045777">
    <property type="term" value="P:positive regulation of blood pressure"/>
    <property type="evidence" value="ECO:0000314"/>
    <property type="project" value="RGD"/>
</dbReference>
<dbReference type="GO" id="GO:0045597">
    <property type="term" value="P:positive regulation of cell differentiation"/>
    <property type="evidence" value="ECO:0000315"/>
    <property type="project" value="RGD"/>
</dbReference>
<dbReference type="GO" id="GO:0008284">
    <property type="term" value="P:positive regulation of cell population proliferation"/>
    <property type="evidence" value="ECO:0000315"/>
    <property type="project" value="RGD"/>
</dbReference>
<dbReference type="GO" id="GO:0007204">
    <property type="term" value="P:positive regulation of cytosolic calcium ion concentration"/>
    <property type="evidence" value="ECO:0000266"/>
    <property type="project" value="RGD"/>
</dbReference>
<dbReference type="GO" id="GO:0032024">
    <property type="term" value="P:positive regulation of insulin secretion"/>
    <property type="evidence" value="ECO:0000314"/>
    <property type="project" value="RGD"/>
</dbReference>
<dbReference type="GO" id="GO:0045944">
    <property type="term" value="P:positive regulation of transcription by RNA polymerase II"/>
    <property type="evidence" value="ECO:0000315"/>
    <property type="project" value="RGD"/>
</dbReference>
<dbReference type="GO" id="GO:0031204">
    <property type="term" value="P:post-translational protein targeting to membrane, translocation"/>
    <property type="evidence" value="ECO:0000266"/>
    <property type="project" value="RGD"/>
</dbReference>
<dbReference type="GO" id="GO:0051924">
    <property type="term" value="P:regulation of calcium ion transport"/>
    <property type="evidence" value="ECO:0000315"/>
    <property type="project" value="RGD"/>
</dbReference>
<dbReference type="GO" id="GO:0008016">
    <property type="term" value="P:regulation of heart contraction"/>
    <property type="evidence" value="ECO:0000266"/>
    <property type="project" value="RGD"/>
</dbReference>
<dbReference type="GO" id="GO:0051209">
    <property type="term" value="P:release of sequestered calcium ion into cytosol"/>
    <property type="evidence" value="ECO:0000314"/>
    <property type="project" value="RGD"/>
</dbReference>
<dbReference type="GO" id="GO:0009749">
    <property type="term" value="P:response to glucose"/>
    <property type="evidence" value="ECO:0000315"/>
    <property type="project" value="RGD"/>
</dbReference>
<dbReference type="GO" id="GO:1990911">
    <property type="term" value="P:response to psychosocial stress"/>
    <property type="evidence" value="ECO:0000266"/>
    <property type="project" value="RGD"/>
</dbReference>
<dbReference type="CDD" id="cd15268">
    <property type="entry name" value="7tmB1_GLP1R"/>
    <property type="match status" value="1"/>
</dbReference>
<dbReference type="FunFam" id="1.20.1070.10:FF:000105">
    <property type="entry name" value="Glucagon like peptide 1 receptor"/>
    <property type="match status" value="1"/>
</dbReference>
<dbReference type="FunFam" id="4.10.1240.10:FF:000013">
    <property type="entry name" value="Glucagon like peptide 1 receptor"/>
    <property type="match status" value="1"/>
</dbReference>
<dbReference type="Gene3D" id="4.10.1240.10">
    <property type="entry name" value="GPCR, family 2, extracellular hormone receptor domain"/>
    <property type="match status" value="1"/>
</dbReference>
<dbReference type="Gene3D" id="1.20.1070.10">
    <property type="entry name" value="Rhodopsin 7-helix transmembrane proteins"/>
    <property type="match status" value="1"/>
</dbReference>
<dbReference type="InterPro" id="IPR047033">
    <property type="entry name" value="GLP1R_7TM"/>
</dbReference>
<dbReference type="InterPro" id="IPR050332">
    <property type="entry name" value="GPCR_2"/>
</dbReference>
<dbReference type="InterPro" id="IPR017981">
    <property type="entry name" value="GPCR_2-like_7TM"/>
</dbReference>
<dbReference type="InterPro" id="IPR036445">
    <property type="entry name" value="GPCR_2_extracell_dom_sf"/>
</dbReference>
<dbReference type="InterPro" id="IPR001879">
    <property type="entry name" value="GPCR_2_extracellular_dom"/>
</dbReference>
<dbReference type="InterPro" id="IPR003290">
    <property type="entry name" value="GPCR_2_GLP1/glucagon_rcpt"/>
</dbReference>
<dbReference type="InterPro" id="IPR003292">
    <property type="entry name" value="GPCR_2_GLP1_rcpt"/>
</dbReference>
<dbReference type="InterPro" id="IPR000832">
    <property type="entry name" value="GPCR_2_secretin-like"/>
</dbReference>
<dbReference type="InterPro" id="IPR017983">
    <property type="entry name" value="GPCR_2_secretin-like_CS"/>
</dbReference>
<dbReference type="PANTHER" id="PTHR45620:SF25">
    <property type="entry name" value="GLUCAGON-LIKE PEPTIDE 1 RECEPTOR"/>
    <property type="match status" value="1"/>
</dbReference>
<dbReference type="PANTHER" id="PTHR45620">
    <property type="entry name" value="PDF RECEPTOR-LIKE PROTEIN-RELATED"/>
    <property type="match status" value="1"/>
</dbReference>
<dbReference type="Pfam" id="PF00002">
    <property type="entry name" value="7tm_2"/>
    <property type="match status" value="1"/>
</dbReference>
<dbReference type="Pfam" id="PF02793">
    <property type="entry name" value="HRM"/>
    <property type="match status" value="1"/>
</dbReference>
<dbReference type="PRINTS" id="PR01353">
    <property type="entry name" value="GLUCAGNFAMLY"/>
</dbReference>
<dbReference type="PRINTS" id="PR01355">
    <property type="entry name" value="GLUCAGNLIKER"/>
</dbReference>
<dbReference type="PRINTS" id="PR00249">
    <property type="entry name" value="GPCRSECRETIN"/>
</dbReference>
<dbReference type="SMART" id="SM00008">
    <property type="entry name" value="HormR"/>
    <property type="match status" value="1"/>
</dbReference>
<dbReference type="SUPFAM" id="SSF81321">
    <property type="entry name" value="Family A G protein-coupled receptor-like"/>
    <property type="match status" value="1"/>
</dbReference>
<dbReference type="SUPFAM" id="SSF111418">
    <property type="entry name" value="Hormone receptor domain"/>
    <property type="match status" value="1"/>
</dbReference>
<dbReference type="PROSITE" id="PS00649">
    <property type="entry name" value="G_PROTEIN_RECEP_F2_1"/>
    <property type="match status" value="1"/>
</dbReference>
<dbReference type="PROSITE" id="PS00650">
    <property type="entry name" value="G_PROTEIN_RECEP_F2_2"/>
    <property type="match status" value="1"/>
</dbReference>
<dbReference type="PROSITE" id="PS50227">
    <property type="entry name" value="G_PROTEIN_RECEP_F2_3"/>
    <property type="match status" value="1"/>
</dbReference>
<dbReference type="PROSITE" id="PS50261">
    <property type="entry name" value="G_PROTEIN_RECEP_F2_4"/>
    <property type="match status" value="1"/>
</dbReference>
<name>GLP1R_RAT</name>
<evidence type="ECO:0000250" key="1">
    <source>
        <dbReference type="UniProtKB" id="O35659"/>
    </source>
</evidence>
<evidence type="ECO:0000250" key="2">
    <source>
        <dbReference type="UniProtKB" id="P43220"/>
    </source>
</evidence>
<evidence type="ECO:0000255" key="3"/>
<evidence type="ECO:0000269" key="4">
    <source>
    </source>
</evidence>
<evidence type="ECO:0000269" key="5">
    <source>
    </source>
</evidence>
<evidence type="ECO:0000269" key="6">
    <source>
    </source>
</evidence>
<evidence type="ECO:0000305" key="7"/>
<keyword id="KW-0013">ADP-ribosylation</keyword>
<keyword id="KW-1003">Cell membrane</keyword>
<keyword id="KW-1015">Disulfide bond</keyword>
<keyword id="KW-0297">G-protein coupled receptor</keyword>
<keyword id="KW-0325">Glycoprotein</keyword>
<keyword id="KW-0472">Membrane</keyword>
<keyword id="KW-0675">Receptor</keyword>
<keyword id="KW-1185">Reference proteome</keyword>
<keyword id="KW-0732">Signal</keyword>
<keyword id="KW-0807">Transducer</keyword>
<keyword id="KW-0812">Transmembrane</keyword>
<keyword id="KW-1133">Transmembrane helix</keyword>
<proteinExistence type="evidence at transcript level"/>
<accession>P32301</accession>
<accession>Q64073</accession>
<accession>Q6LD83</accession>
<reference key="1">
    <citation type="journal article" date="1992" name="Proc. Natl. Acad. Sci. U.S.A.">
        <title>Expression cloning of the pancreatic beta cell receptor for the gluco-incretin hormone glucagon-like peptide 1.</title>
        <authorList>
            <person name="Thorens B."/>
        </authorList>
    </citation>
    <scope>NUCLEOTIDE SEQUENCE [MRNA]</scope>
    <scope>FUNCTION</scope>
    <scope>SUBCELLULAR LOCATION</scope>
    <scope>TISSUE SPECIFICITY</scope>
    <source>
        <strain>Sprague-Dawley</strain>
        <tissue>Pancreatic islet</tissue>
    </source>
</reference>
<reference key="2">
    <citation type="journal article" date="1994" name="Exp. Clin. Endocrinol.">
        <title>Molecular cloning of a cDNA encoding for the GLP-1 receptor expressed in rat lung.</title>
        <authorList>
            <person name="Lankat-Buttgereit B."/>
            <person name="Goke R."/>
            <person name="Fehmann H.C."/>
            <person name="Richter G."/>
            <person name="Goke B."/>
        </authorList>
    </citation>
    <scope>NUCLEOTIDE SEQUENCE [MRNA]</scope>
    <scope>FUNCTION</scope>
    <scope>SUBCELLULAR LOCATION</scope>
    <source>
        <tissue>Lung</tissue>
    </source>
</reference>
<reference key="3">
    <citation type="journal article" date="1994" name="J. Biol. Chem.">
        <title>Glucagon and glucagon-like peptide 1: selective receptor recognition via distinct peptide epitopes.</title>
        <authorList>
            <person name="Hjorth S.A."/>
            <person name="Adelhorst K."/>
            <person name="Pedersen B.B."/>
            <person name="Kirk O."/>
            <person name="Schwartz T.W."/>
        </authorList>
    </citation>
    <scope>FUNCTION</scope>
</reference>
<protein>
    <recommendedName>
        <fullName>Glucagon-like peptide 1 receptor</fullName>
        <shortName>GLP-1 receptor</shortName>
        <shortName>GLP-1-R</shortName>
        <shortName>GLP-1R</shortName>
    </recommendedName>
</protein>
<comment type="function">
    <text evidence="1 4 5 6">G-protein coupled receptor for glucagon-like peptide 1 (GLP-1) (PubMed:1326760, PubMed:7527026, PubMed:7813606). Ligand binding triggers activation of a signaling cascade that leads to the activation of adenylyl cyclase and increased intracellular cAMP levels (PubMed:1326760, PubMed:7813606). Plays a role in regulating insulin secretion in response to GLP-1 (By similarity).</text>
</comment>
<comment type="subunit">
    <text evidence="2">May form homodimers and heterodimers with GIPR.</text>
</comment>
<comment type="subcellular location">
    <subcellularLocation>
        <location evidence="4 6">Cell membrane</location>
        <topology evidence="2">Multi-pass membrane protein</topology>
    </subcellularLocation>
</comment>
<comment type="tissue specificity">
    <text evidence="4">Pancreatic islets, stomach, lung, rat insulinoma cell line.</text>
</comment>
<comment type="PTM">
    <text evidence="2">N-glycosylation enhances cell surface expression and lengthens receptor half-life by preventing degradation in the ER.</text>
</comment>
<comment type="miscellaneous">
    <text evidence="5">Selective recognition of glucagon-like peptide over glucagon is determined by residues located at the C-terminal end of the glucagon-like peptide.</text>
</comment>
<comment type="similarity">
    <text evidence="7">Belongs to the G-protein coupled receptor 2 family.</text>
</comment>
<sequence length="463" mass="52877">MAVTPSLLRLALLLLGAVGRAGPRPQGATVSLSETVQKWREYRHQCQRFLTEAPLLATGLFCNRTFDDYACWPDGPPGSFVNVSCPWYLPWASSVLQGHVYRFCTAEGIWLHKDNSSLPWRDLSECEESKQGERNSPEEQLLSLYIIYTVGYALSFSALVIASAILVSFRHLHCTRNYIHLNLFASFILRALSVFIKDAALKWMYSTAAQQHQWDGLLSYQDSLGCRLVFLLMQYCVAANYYWLLVEGVYLYTLLAFSVFSEQRIFKLYLSIGWGVPLLFVIPWGIVKYLYEDEGCWTRNSNMNYWLIIRLPILFAIGVNFLVFIRVICIVIAKLKANLMCKTDIKCRLAKSTLTLIPLLGTHEVIFAFVMDEHARGTLRFVKLFTELSFTSFQGFMVAVLYCFVNNEVQMEFRKSWERWRLERLNIQRDSSMKPLKCPTSSVSSGATVGSSVYAATCQNSCS</sequence>
<feature type="signal peptide" evidence="3">
    <location>
        <begin position="1"/>
        <end position="21"/>
    </location>
</feature>
<feature type="chain" id="PRO_0000012837" description="Glucagon-like peptide 1 receptor">
    <location>
        <begin position="22"/>
        <end position="463"/>
    </location>
</feature>
<feature type="topological domain" description="Extracellular" evidence="7">
    <location>
        <begin position="22"/>
        <end position="139"/>
    </location>
</feature>
<feature type="transmembrane region" description="Helical; Name=1" evidence="2">
    <location>
        <begin position="140"/>
        <end position="164"/>
    </location>
</feature>
<feature type="topological domain" description="Cytoplasmic" evidence="7">
    <location>
        <begin position="165"/>
        <end position="175"/>
    </location>
</feature>
<feature type="transmembrane region" description="Helical; Name=2" evidence="2">
    <location>
        <begin position="176"/>
        <end position="201"/>
    </location>
</feature>
<feature type="topological domain" description="Extracellular" evidence="7">
    <location>
        <begin position="202"/>
        <end position="227"/>
    </location>
</feature>
<feature type="transmembrane region" description="Helical; Name=3" evidence="2">
    <location>
        <begin position="228"/>
        <end position="251"/>
    </location>
</feature>
<feature type="topological domain" description="Cytoplasmic" evidence="7">
    <location>
        <begin position="252"/>
        <end position="265"/>
    </location>
</feature>
<feature type="transmembrane region" description="Helical; Name=4" evidence="2">
    <location>
        <begin position="266"/>
        <end position="290"/>
    </location>
</feature>
<feature type="topological domain" description="Extracellular" evidence="7">
    <location>
        <begin position="291"/>
        <end position="305"/>
    </location>
</feature>
<feature type="transmembrane region" description="Helical; Name=5" evidence="2">
    <location>
        <begin position="306"/>
        <end position="328"/>
    </location>
</feature>
<feature type="topological domain" description="Cytoplasmic" evidence="7">
    <location>
        <begin position="329"/>
        <end position="348"/>
    </location>
</feature>
<feature type="transmembrane region" description="Helical; Name=6" evidence="2">
    <location>
        <begin position="349"/>
        <end position="370"/>
    </location>
</feature>
<feature type="topological domain" description="Extracellular" evidence="7">
    <location>
        <begin position="371"/>
        <end position="383"/>
    </location>
</feature>
<feature type="transmembrane region" description="Helical; Name=7" evidence="2">
    <location>
        <begin position="384"/>
        <end position="404"/>
    </location>
</feature>
<feature type="topological domain" description="Cytoplasmic" evidence="7">
    <location>
        <begin position="405"/>
        <end position="463"/>
    </location>
</feature>
<feature type="region of interest" description="Important for allosteric inhibitor binding" evidence="2">
    <location>
        <begin position="352"/>
        <end position="355"/>
    </location>
</feature>
<feature type="site" description="Interaction with the endogenous ligand GLP-1" evidence="2">
    <location>
        <position position="121"/>
    </location>
</feature>
<feature type="site" description="Interaction with the endogenous ligand GLP-1" evidence="2">
    <location>
        <position position="128"/>
    </location>
</feature>
<feature type="modified residue" description="ADP-ribosylcysteine" evidence="2">
    <location>
        <position position="341"/>
    </location>
</feature>
<feature type="modified residue" description="ADP-ribosylarginine" evidence="2">
    <location>
        <position position="348"/>
    </location>
</feature>
<feature type="glycosylation site" description="N-linked (GlcNAc...) asparagine" evidence="3">
    <location>
        <position position="63"/>
    </location>
</feature>
<feature type="glycosylation site" description="N-linked (GlcNAc...) asparagine" evidence="3">
    <location>
        <position position="82"/>
    </location>
</feature>
<feature type="glycosylation site" description="N-linked (GlcNAc...) asparagine" evidence="3">
    <location>
        <position position="115"/>
    </location>
</feature>
<feature type="disulfide bond" evidence="2">
    <location>
        <begin position="46"/>
        <end position="71"/>
    </location>
</feature>
<feature type="disulfide bond" evidence="2">
    <location>
        <begin position="62"/>
        <end position="104"/>
    </location>
</feature>
<feature type="disulfide bond" evidence="2">
    <location>
        <begin position="85"/>
        <end position="126"/>
    </location>
</feature>
<feature type="disulfide bond" evidence="2">
    <location>
        <begin position="226"/>
        <end position="296"/>
    </location>
</feature>
<feature type="sequence conflict" description="In Ref. 2; AAP31860." evidence="7" ref="2">
    <original>V</original>
    <variation>I</variation>
    <location>
        <position position="323"/>
    </location>
</feature>
<organism>
    <name type="scientific">Rattus norvegicus</name>
    <name type="common">Rat</name>
    <dbReference type="NCBI Taxonomy" id="10116"/>
    <lineage>
        <taxon>Eukaryota</taxon>
        <taxon>Metazoa</taxon>
        <taxon>Chordata</taxon>
        <taxon>Craniata</taxon>
        <taxon>Vertebrata</taxon>
        <taxon>Euteleostomi</taxon>
        <taxon>Mammalia</taxon>
        <taxon>Eutheria</taxon>
        <taxon>Euarchontoglires</taxon>
        <taxon>Glires</taxon>
        <taxon>Rodentia</taxon>
        <taxon>Myomorpha</taxon>
        <taxon>Muroidea</taxon>
        <taxon>Muridae</taxon>
        <taxon>Murinae</taxon>
        <taxon>Rattus</taxon>
    </lineage>
</organism>
<gene>
    <name type="primary">Glp1r</name>
    <name type="synonym">Glpr</name>
</gene>